<keyword id="KW-0150">Chloroplast</keyword>
<keyword id="KW-0472">Membrane</keyword>
<keyword id="KW-0520">NAD</keyword>
<keyword id="KW-0521">NADP</keyword>
<keyword id="KW-0934">Plastid</keyword>
<keyword id="KW-0618">Plastoquinone</keyword>
<keyword id="KW-0874">Quinone</keyword>
<keyword id="KW-0793">Thylakoid</keyword>
<keyword id="KW-1278">Translocase</keyword>
<keyword id="KW-0812">Transmembrane</keyword>
<keyword id="KW-1133">Transmembrane helix</keyword>
<keyword id="KW-0813">Transport</keyword>
<protein>
    <recommendedName>
        <fullName>NAD(P)H-quinone oxidoreductase subunit 5, chloroplastic</fullName>
        <ecNumber>7.1.1.-</ecNumber>
    </recommendedName>
    <alternativeName>
        <fullName>NAD(P)H dehydrogenase subunit 5</fullName>
    </alternativeName>
    <alternativeName>
        <fullName>NADH-plastoquinone oxidoreductase subunit 5</fullName>
    </alternativeName>
</protein>
<proteinExistence type="inferred from homology"/>
<organism>
    <name type="scientific">Mutisia acuminata</name>
    <dbReference type="NCBI Taxonomy" id="41608"/>
    <lineage>
        <taxon>Eukaryota</taxon>
        <taxon>Viridiplantae</taxon>
        <taxon>Streptophyta</taxon>
        <taxon>Embryophyta</taxon>
        <taxon>Tracheophyta</taxon>
        <taxon>Spermatophyta</taxon>
        <taxon>Magnoliopsida</taxon>
        <taxon>eudicotyledons</taxon>
        <taxon>Gunneridae</taxon>
        <taxon>Pentapetalae</taxon>
        <taxon>asterids</taxon>
        <taxon>campanulids</taxon>
        <taxon>Asterales</taxon>
        <taxon>Asteraceae</taxon>
        <taxon>Mutisioideae</taxon>
        <taxon>Mutisieae</taxon>
        <taxon>Mutisia</taxon>
    </lineage>
</organism>
<comment type="function">
    <text evidence="1">NDH shuttles electrons from NAD(P)H:plastoquinone, via FMN and iron-sulfur (Fe-S) centers, to quinones in the photosynthetic chain and possibly in a chloroplast respiratory chain. The immediate electron acceptor for the enzyme in this species is believed to be plastoquinone. Couples the redox reaction to proton translocation, and thus conserves the redox energy in a proton gradient (By similarity).</text>
</comment>
<comment type="catalytic activity">
    <reaction>
        <text>a plastoquinone + NADH + (n+1) H(+)(in) = a plastoquinol + NAD(+) + n H(+)(out)</text>
        <dbReference type="Rhea" id="RHEA:42608"/>
        <dbReference type="Rhea" id="RHEA-COMP:9561"/>
        <dbReference type="Rhea" id="RHEA-COMP:9562"/>
        <dbReference type="ChEBI" id="CHEBI:15378"/>
        <dbReference type="ChEBI" id="CHEBI:17757"/>
        <dbReference type="ChEBI" id="CHEBI:57540"/>
        <dbReference type="ChEBI" id="CHEBI:57945"/>
        <dbReference type="ChEBI" id="CHEBI:62192"/>
    </reaction>
</comment>
<comment type="catalytic activity">
    <reaction>
        <text>a plastoquinone + NADPH + (n+1) H(+)(in) = a plastoquinol + NADP(+) + n H(+)(out)</text>
        <dbReference type="Rhea" id="RHEA:42612"/>
        <dbReference type="Rhea" id="RHEA-COMP:9561"/>
        <dbReference type="Rhea" id="RHEA-COMP:9562"/>
        <dbReference type="ChEBI" id="CHEBI:15378"/>
        <dbReference type="ChEBI" id="CHEBI:17757"/>
        <dbReference type="ChEBI" id="CHEBI:57783"/>
        <dbReference type="ChEBI" id="CHEBI:58349"/>
        <dbReference type="ChEBI" id="CHEBI:62192"/>
    </reaction>
</comment>
<comment type="subunit">
    <text evidence="1">NDH is composed of at least 16 different subunits, 5 of which are encoded in the nucleus.</text>
</comment>
<comment type="subcellular location">
    <subcellularLocation>
        <location evidence="1">Plastid</location>
        <location evidence="1">Chloroplast thylakoid membrane</location>
        <topology evidence="1">Multi-pass membrane protein</topology>
    </subcellularLocation>
</comment>
<comment type="similarity">
    <text evidence="3">Belongs to the complex I subunit 5 family.</text>
</comment>
<accession>Q32551</accession>
<gene>
    <name type="primary">ndhF</name>
</gene>
<feature type="chain" id="PRO_0000118195" description="NAD(P)H-quinone oxidoreductase subunit 5, chloroplastic">
    <location>
        <begin position="1"/>
        <end position="744"/>
    </location>
</feature>
<feature type="transmembrane region" description="Helical" evidence="2">
    <location>
        <begin position="9"/>
        <end position="29"/>
    </location>
</feature>
<feature type="transmembrane region" description="Helical" evidence="2">
    <location>
        <begin position="40"/>
        <end position="60"/>
    </location>
</feature>
<feature type="transmembrane region" description="Helical" evidence="2">
    <location>
        <begin position="89"/>
        <end position="109"/>
    </location>
</feature>
<feature type="transmembrane region" description="Helical" evidence="2">
    <location>
        <begin position="125"/>
        <end position="145"/>
    </location>
</feature>
<feature type="transmembrane region" description="Helical" evidence="2">
    <location>
        <begin position="147"/>
        <end position="167"/>
    </location>
</feature>
<feature type="transmembrane region" description="Helical" evidence="2">
    <location>
        <begin position="185"/>
        <end position="205"/>
    </location>
</feature>
<feature type="transmembrane region" description="Helical" evidence="2">
    <location>
        <begin position="219"/>
        <end position="239"/>
    </location>
</feature>
<feature type="transmembrane region" description="Helical" evidence="2">
    <location>
        <begin position="258"/>
        <end position="278"/>
    </location>
</feature>
<feature type="transmembrane region" description="Helical" evidence="2">
    <location>
        <begin position="290"/>
        <end position="312"/>
    </location>
</feature>
<feature type="transmembrane region" description="Helical" evidence="2">
    <location>
        <begin position="327"/>
        <end position="347"/>
    </location>
</feature>
<feature type="transmembrane region" description="Helical" evidence="2">
    <location>
        <begin position="354"/>
        <end position="374"/>
    </location>
</feature>
<feature type="transmembrane region" description="Helical" evidence="2">
    <location>
        <begin position="396"/>
        <end position="416"/>
    </location>
</feature>
<feature type="transmembrane region" description="Helical" evidence="2">
    <location>
        <begin position="425"/>
        <end position="445"/>
    </location>
</feature>
<feature type="transmembrane region" description="Helical" evidence="2">
    <location>
        <begin position="549"/>
        <end position="569"/>
    </location>
</feature>
<feature type="transmembrane region" description="Helical" evidence="2">
    <location>
        <begin position="608"/>
        <end position="628"/>
    </location>
</feature>
<feature type="transmembrane region" description="Helical" evidence="2">
    <location>
        <begin position="724"/>
        <end position="744"/>
    </location>
</feature>
<name>NU5C_MUTAC</name>
<dbReference type="EC" id="7.1.1.-"/>
<dbReference type="EMBL" id="L39400">
    <property type="protein sequence ID" value="AAC37761.1"/>
    <property type="molecule type" value="Genomic_DNA"/>
</dbReference>
<dbReference type="PIR" id="T13399">
    <property type="entry name" value="T13399"/>
</dbReference>
<dbReference type="SMR" id="Q32551"/>
<dbReference type="GO" id="GO:0009535">
    <property type="term" value="C:chloroplast thylakoid membrane"/>
    <property type="evidence" value="ECO:0007669"/>
    <property type="project" value="UniProtKB-SubCell"/>
</dbReference>
<dbReference type="GO" id="GO:0008137">
    <property type="term" value="F:NADH dehydrogenase (ubiquinone) activity"/>
    <property type="evidence" value="ECO:0007669"/>
    <property type="project" value="InterPro"/>
</dbReference>
<dbReference type="GO" id="GO:0048038">
    <property type="term" value="F:quinone binding"/>
    <property type="evidence" value="ECO:0007669"/>
    <property type="project" value="UniProtKB-KW"/>
</dbReference>
<dbReference type="GO" id="GO:0042773">
    <property type="term" value="P:ATP synthesis coupled electron transport"/>
    <property type="evidence" value="ECO:0007669"/>
    <property type="project" value="InterPro"/>
</dbReference>
<dbReference type="GO" id="GO:0015990">
    <property type="term" value="P:electron transport coupled proton transport"/>
    <property type="evidence" value="ECO:0007669"/>
    <property type="project" value="TreeGrafter"/>
</dbReference>
<dbReference type="Gene3D" id="1.20.5.2700">
    <property type="match status" value="1"/>
</dbReference>
<dbReference type="InterPro" id="IPR002128">
    <property type="entry name" value="NADH_UbQ_OxRdtase_chlpt_su5_C"/>
</dbReference>
<dbReference type="InterPro" id="IPR018393">
    <property type="entry name" value="NADHpl_OxRdtase_5_subgr"/>
</dbReference>
<dbReference type="InterPro" id="IPR001750">
    <property type="entry name" value="ND/Mrp_TM"/>
</dbReference>
<dbReference type="InterPro" id="IPR003945">
    <property type="entry name" value="NU5C-like"/>
</dbReference>
<dbReference type="InterPro" id="IPR001516">
    <property type="entry name" value="Proton_antipo_N"/>
</dbReference>
<dbReference type="NCBIfam" id="TIGR01974">
    <property type="entry name" value="NDH_I_L"/>
    <property type="match status" value="1"/>
</dbReference>
<dbReference type="NCBIfam" id="NF005141">
    <property type="entry name" value="PRK06590.1"/>
    <property type="match status" value="1"/>
</dbReference>
<dbReference type="PANTHER" id="PTHR42829">
    <property type="entry name" value="NADH-UBIQUINONE OXIDOREDUCTASE CHAIN 5"/>
    <property type="match status" value="1"/>
</dbReference>
<dbReference type="PANTHER" id="PTHR42829:SF2">
    <property type="entry name" value="NADH-UBIQUINONE OXIDOREDUCTASE CHAIN 5"/>
    <property type="match status" value="1"/>
</dbReference>
<dbReference type="Pfam" id="PF01010">
    <property type="entry name" value="Proton_antipo_C"/>
    <property type="match status" value="1"/>
</dbReference>
<dbReference type="Pfam" id="PF00361">
    <property type="entry name" value="Proton_antipo_M"/>
    <property type="match status" value="1"/>
</dbReference>
<dbReference type="Pfam" id="PF00662">
    <property type="entry name" value="Proton_antipo_N"/>
    <property type="match status" value="1"/>
</dbReference>
<dbReference type="PRINTS" id="PR01434">
    <property type="entry name" value="NADHDHGNASE5"/>
</dbReference>
<dbReference type="PRINTS" id="PR01435">
    <property type="entry name" value="NPOXDRDTASE5"/>
</dbReference>
<evidence type="ECO:0000250" key="1"/>
<evidence type="ECO:0000255" key="2"/>
<evidence type="ECO:0000305" key="3"/>
<sequence length="744" mass="84461">MEQTYQYAWIIPFLPLPVPMLIGLGLFLFPTATKSLRRMWAFQSVLLLSIVMIFSMNLSIQQINSSSAYQYVWSWIINNDVSLEFGYLIDPLTSIMSILITTVGILVLIYSDNYMSHDHGYLRFFVYMSFFSTSMLGLVTSSNLIQIYIFWELVGICSYLLIGFWFTRPVAAKACQKAFVTNRVGDFGLLLGILGFYWITGSFEFRNLFQIFNNLISNNEVNFLFVTLCAVLLFAGAIAKSAQFPLHVWLPDAMEGPTPISALIHAATMVAAGIFLVARLLPLFIVIPHIMNFISLIGIITVFLGATLALAQKDIKRGLAYSTMSQLGYMMLALGMGSYRSALFHLITHAYSKALLFLGSGSVIHSMETLVGYCPKKSQNMVLMGGLTKHVPITKTSFLLGTLSLCGIPPLACFWSKDEILNDSWLYSPIFAIIAWSTAGLTAFYMCRIYLLTFEGHLNVHFQNYSGKKNTPFYSISLWGKEGSKISNKNFSLITLLKMKKDGRPSFFSNKVYKIDENVRNMIQPFLSIPHFGNTKTYSYPYESDNTMLFPILILVLFTLFVGFLGIPFNQDGVDLDILSKWLTPSINLLHKNSNNSIDWYEFCKDAVFSVSISSFGIFIAFFLYKPVYSSFQNLDLINSFVKMGPKRIFSDKIKKVIYDWSYNRGYIDAFYETFLTVGMRNLAKFAHFFDRRIIDGMPNGVGLMSFFVAEVIKSVGGGRISSYLFFYFSYVSIFLLIYYFLNF</sequence>
<reference key="1">
    <citation type="journal article" date="1995" name="Proc. Natl. Acad. Sci. U.S.A.">
        <title>ndhF sequence evolution and the major clades in the sunflower family.</title>
        <authorList>
            <person name="Kim K.-J."/>
            <person name="Jansen R.K."/>
        </authorList>
    </citation>
    <scope>NUCLEOTIDE SEQUENCE [GENOMIC DNA]</scope>
</reference>
<geneLocation type="chloroplast"/>